<proteinExistence type="inferred from homology"/>
<keyword id="KW-0067">ATP-binding</keyword>
<keyword id="KW-0418">Kinase</keyword>
<keyword id="KW-0460">Magnesium</keyword>
<keyword id="KW-0479">Metal-binding</keyword>
<keyword id="KW-0547">Nucleotide-binding</keyword>
<keyword id="KW-0597">Phosphoprotein</keyword>
<keyword id="KW-0677">Repeat</keyword>
<keyword id="KW-0808">Transferase</keyword>
<sequence length="700" mass="81861">MSADKFYIEKELSWLSFNERVLQEAADKTVPLIERIRFLGIFSNNLDEFYKVRFSDVKRRILINREQGGNDISKHLLSKMQSKALKLNERFDELYNELIRDMARRHIFLVNESQLDEAQQKWIIKYFQKEVLPHITPLMLTDEIDVLQFLKDEYAYIAVELKQQEQAKYALLEIPTDHLPRFIMVPEQKGKRKKTIILLDNIIRFCLNDIFRGFFDYDELNGYAMKMTRDAEYDLRHEVEYSLLEQMSEGLSQRLTALPVRFVYERDMPEDMLKYLCYKLKISHYDSLIPGGRYHNFKDFIAFPNVGRDYLENKPLPPLACADFEGYANAFDAIRNQDILLHYPYHSFEHITELVRQASFDPKVVSIKINVYRVAKNSRLMNSLIDAVHNGKRVTVVVELQARFDEEANIEWSKRLTDAGVHVIFGVPGMKIHAKLLLITRREEQGFVRYAHIGTGNFHERTARIYTDFSLLTADQELAAEVRGVFSYIMNPFRPIKFRHLIVSPRNSRSQLYRLLDREIHNAQAGKKASITLKVNNLVDKGLISKLYAASSAGVKIRMIIRGMCSLVPGLEGISENIEIISIIDRFLEHPRVLVVHNDGDPQVFISSADWMERNIDNRIEVMSPVRDARIKQRIIDILSIQFTDTVKARRIDKEMSNNYVERGNRKKIRSQIAIYDYLKNVEKHTRKQKGQVEPNDNNE</sequence>
<feature type="chain" id="PRO_0000128669" description="Polyphosphate kinase">
    <location>
        <begin position="1"/>
        <end position="700"/>
    </location>
</feature>
<feature type="domain" description="PLD phosphodiesterase 1" evidence="1">
    <location>
        <begin position="428"/>
        <end position="462"/>
    </location>
</feature>
<feature type="domain" description="PLD phosphodiesterase 2" evidence="1">
    <location>
        <begin position="585"/>
        <end position="615"/>
    </location>
</feature>
<feature type="active site" description="Phosphohistidine intermediate" evidence="1">
    <location>
        <position position="433"/>
    </location>
</feature>
<feature type="binding site" evidence="1">
    <location>
        <position position="45"/>
    </location>
    <ligand>
        <name>ATP</name>
        <dbReference type="ChEBI" id="CHEBI:30616"/>
    </ligand>
</feature>
<feature type="binding site" evidence="1">
    <location>
        <position position="373"/>
    </location>
    <ligand>
        <name>Mg(2+)</name>
        <dbReference type="ChEBI" id="CHEBI:18420"/>
    </ligand>
</feature>
<feature type="binding site" evidence="1">
    <location>
        <position position="403"/>
    </location>
    <ligand>
        <name>Mg(2+)</name>
        <dbReference type="ChEBI" id="CHEBI:18420"/>
    </ligand>
</feature>
<feature type="binding site" evidence="1">
    <location>
        <position position="466"/>
    </location>
    <ligand>
        <name>ATP</name>
        <dbReference type="ChEBI" id="CHEBI:30616"/>
    </ligand>
</feature>
<feature type="binding site" evidence="1">
    <location>
        <position position="562"/>
    </location>
    <ligand>
        <name>ATP</name>
        <dbReference type="ChEBI" id="CHEBI:30616"/>
    </ligand>
</feature>
<feature type="binding site" evidence="1">
    <location>
        <position position="590"/>
    </location>
    <ligand>
        <name>ATP</name>
        <dbReference type="ChEBI" id="CHEBI:30616"/>
    </ligand>
</feature>
<evidence type="ECO:0000255" key="1">
    <source>
        <dbReference type="HAMAP-Rule" id="MF_00347"/>
    </source>
</evidence>
<protein>
    <recommendedName>
        <fullName evidence="1">Polyphosphate kinase</fullName>
        <ecNumber evidence="1">2.7.4.1</ecNumber>
    </recommendedName>
    <alternativeName>
        <fullName evidence="1">ATP-polyphosphate phosphotransferase</fullName>
    </alternativeName>
    <alternativeName>
        <fullName evidence="1">Polyphosphoric acid kinase</fullName>
    </alternativeName>
</protein>
<name>PPK1_VIBVY</name>
<dbReference type="EC" id="2.7.4.1" evidence="1"/>
<dbReference type="EMBL" id="BA000037">
    <property type="protein sequence ID" value="BAC93491.1"/>
    <property type="molecule type" value="Genomic_DNA"/>
</dbReference>
<dbReference type="SMR" id="Q7MNJ0"/>
<dbReference type="STRING" id="672.VV93_v1c06740"/>
<dbReference type="KEGG" id="vvy:VV0727"/>
<dbReference type="PATRIC" id="fig|196600.6.peg.744"/>
<dbReference type="eggNOG" id="COG0855">
    <property type="taxonomic scope" value="Bacteria"/>
</dbReference>
<dbReference type="HOGENOM" id="CLU_009678_5_0_6"/>
<dbReference type="Proteomes" id="UP000002675">
    <property type="component" value="Chromosome I"/>
</dbReference>
<dbReference type="GO" id="GO:0009358">
    <property type="term" value="C:polyphosphate kinase complex"/>
    <property type="evidence" value="ECO:0007669"/>
    <property type="project" value="InterPro"/>
</dbReference>
<dbReference type="GO" id="GO:0005524">
    <property type="term" value="F:ATP binding"/>
    <property type="evidence" value="ECO:0007669"/>
    <property type="project" value="UniProtKB-KW"/>
</dbReference>
<dbReference type="GO" id="GO:0046872">
    <property type="term" value="F:metal ion binding"/>
    <property type="evidence" value="ECO:0007669"/>
    <property type="project" value="UniProtKB-KW"/>
</dbReference>
<dbReference type="GO" id="GO:0008976">
    <property type="term" value="F:polyphosphate kinase activity"/>
    <property type="evidence" value="ECO:0007669"/>
    <property type="project" value="UniProtKB-UniRule"/>
</dbReference>
<dbReference type="GO" id="GO:0006799">
    <property type="term" value="P:polyphosphate biosynthetic process"/>
    <property type="evidence" value="ECO:0007669"/>
    <property type="project" value="UniProtKB-UniRule"/>
</dbReference>
<dbReference type="CDD" id="cd09164">
    <property type="entry name" value="PLDc_EcPPK1_C1_like"/>
    <property type="match status" value="1"/>
</dbReference>
<dbReference type="FunFam" id="3.30.870.10:FF:000001">
    <property type="entry name" value="Polyphosphate kinase"/>
    <property type="match status" value="1"/>
</dbReference>
<dbReference type="Gene3D" id="3.30.870.10">
    <property type="entry name" value="Endonuclease Chain A"/>
    <property type="match status" value="2"/>
</dbReference>
<dbReference type="Gene3D" id="3.30.1840.10">
    <property type="entry name" value="Polyphosphate kinase middle domain"/>
    <property type="match status" value="1"/>
</dbReference>
<dbReference type="Gene3D" id="1.20.58.310">
    <property type="entry name" value="Polyphosphate kinase N-terminal domain"/>
    <property type="match status" value="1"/>
</dbReference>
<dbReference type="HAMAP" id="MF_00347">
    <property type="entry name" value="Polyphosphate_kinase"/>
    <property type="match status" value="1"/>
</dbReference>
<dbReference type="InterPro" id="IPR001736">
    <property type="entry name" value="PLipase_D/transphosphatidylase"/>
</dbReference>
<dbReference type="InterPro" id="IPR003414">
    <property type="entry name" value="PP_kinase"/>
</dbReference>
<dbReference type="InterPro" id="IPR041108">
    <property type="entry name" value="PP_kinase_C_1"/>
</dbReference>
<dbReference type="InterPro" id="IPR024953">
    <property type="entry name" value="PP_kinase_middle"/>
</dbReference>
<dbReference type="InterPro" id="IPR036830">
    <property type="entry name" value="PP_kinase_middle_dom_sf"/>
</dbReference>
<dbReference type="InterPro" id="IPR025200">
    <property type="entry name" value="PPK_C_dom2"/>
</dbReference>
<dbReference type="InterPro" id="IPR025198">
    <property type="entry name" value="PPK_N_dom"/>
</dbReference>
<dbReference type="InterPro" id="IPR036832">
    <property type="entry name" value="PPK_N_dom_sf"/>
</dbReference>
<dbReference type="NCBIfam" id="TIGR03705">
    <property type="entry name" value="poly_P_kin"/>
    <property type="match status" value="1"/>
</dbReference>
<dbReference type="NCBIfam" id="NF003917">
    <property type="entry name" value="PRK05443.1-1"/>
    <property type="match status" value="1"/>
</dbReference>
<dbReference type="PANTHER" id="PTHR30218">
    <property type="entry name" value="POLYPHOSPHATE KINASE"/>
    <property type="match status" value="1"/>
</dbReference>
<dbReference type="PANTHER" id="PTHR30218:SF0">
    <property type="entry name" value="POLYPHOSPHATE KINASE"/>
    <property type="match status" value="1"/>
</dbReference>
<dbReference type="Pfam" id="PF02503">
    <property type="entry name" value="PP_kinase"/>
    <property type="match status" value="1"/>
</dbReference>
<dbReference type="Pfam" id="PF13090">
    <property type="entry name" value="PP_kinase_C"/>
    <property type="match status" value="1"/>
</dbReference>
<dbReference type="Pfam" id="PF17941">
    <property type="entry name" value="PP_kinase_C_1"/>
    <property type="match status" value="1"/>
</dbReference>
<dbReference type="Pfam" id="PF13089">
    <property type="entry name" value="PP_kinase_N"/>
    <property type="match status" value="1"/>
</dbReference>
<dbReference type="PIRSF" id="PIRSF015589">
    <property type="entry name" value="PP_kinase"/>
    <property type="match status" value="1"/>
</dbReference>
<dbReference type="SUPFAM" id="SSF56024">
    <property type="entry name" value="Phospholipase D/nuclease"/>
    <property type="match status" value="2"/>
</dbReference>
<dbReference type="SUPFAM" id="SSF143724">
    <property type="entry name" value="PHP14-like"/>
    <property type="match status" value="1"/>
</dbReference>
<dbReference type="SUPFAM" id="SSF140356">
    <property type="entry name" value="PPK N-terminal domain-like"/>
    <property type="match status" value="1"/>
</dbReference>
<dbReference type="PROSITE" id="PS50035">
    <property type="entry name" value="PLD"/>
    <property type="match status" value="2"/>
</dbReference>
<reference key="1">
    <citation type="journal article" date="2003" name="Genome Res.">
        <title>Comparative genome analysis of Vibrio vulnificus, a marine pathogen.</title>
        <authorList>
            <person name="Chen C.-Y."/>
            <person name="Wu K.-M."/>
            <person name="Chang Y.-C."/>
            <person name="Chang C.-H."/>
            <person name="Tsai H.-C."/>
            <person name="Liao T.-L."/>
            <person name="Liu Y.-M."/>
            <person name="Chen H.-J."/>
            <person name="Shen A.B.-T."/>
            <person name="Li J.-C."/>
            <person name="Su T.-L."/>
            <person name="Shao C.-P."/>
            <person name="Lee C.-T."/>
            <person name="Hor L.-I."/>
            <person name="Tsai S.-F."/>
        </authorList>
    </citation>
    <scope>NUCLEOTIDE SEQUENCE [LARGE SCALE GENOMIC DNA]</scope>
    <source>
        <strain>YJ016</strain>
    </source>
</reference>
<organism>
    <name type="scientific">Vibrio vulnificus (strain YJ016)</name>
    <dbReference type="NCBI Taxonomy" id="196600"/>
    <lineage>
        <taxon>Bacteria</taxon>
        <taxon>Pseudomonadati</taxon>
        <taxon>Pseudomonadota</taxon>
        <taxon>Gammaproteobacteria</taxon>
        <taxon>Vibrionales</taxon>
        <taxon>Vibrionaceae</taxon>
        <taxon>Vibrio</taxon>
    </lineage>
</organism>
<accession>Q7MNJ0</accession>
<comment type="function">
    <text evidence="1">Catalyzes the reversible transfer of the terminal phosphate of ATP to form a long-chain polyphosphate (polyP).</text>
</comment>
<comment type="catalytic activity">
    <reaction evidence="1">
        <text>[phosphate](n) + ATP = [phosphate](n+1) + ADP</text>
        <dbReference type="Rhea" id="RHEA:19573"/>
        <dbReference type="Rhea" id="RHEA-COMP:9859"/>
        <dbReference type="Rhea" id="RHEA-COMP:14280"/>
        <dbReference type="ChEBI" id="CHEBI:16838"/>
        <dbReference type="ChEBI" id="CHEBI:30616"/>
        <dbReference type="ChEBI" id="CHEBI:456216"/>
        <dbReference type="EC" id="2.7.4.1"/>
    </reaction>
</comment>
<comment type="cofactor">
    <cofactor evidence="1">
        <name>Mg(2+)</name>
        <dbReference type="ChEBI" id="CHEBI:18420"/>
    </cofactor>
</comment>
<comment type="PTM">
    <text evidence="1">An intermediate of this reaction is the autophosphorylated ppk in which a phosphate is covalently linked to a histidine residue through a N-P bond.</text>
</comment>
<comment type="similarity">
    <text evidence="1">Belongs to the polyphosphate kinase 1 (PPK1) family.</text>
</comment>
<gene>
    <name evidence="1" type="primary">ppk</name>
    <name type="ordered locus">VV0727</name>
</gene>